<accession>A5F964</accession>
<accession>C3LXD0</accession>
<gene>
    <name type="ordered locus">VC0395_A0134</name>
    <name type="ordered locus">VC395_0622</name>
</gene>
<feature type="chain" id="PRO_1000072993" description="UPF0231 protein VC0395_A0134/VC395_0622">
    <location>
        <begin position="1"/>
        <end position="126"/>
    </location>
</feature>
<proteinExistence type="inferred from homology"/>
<organism>
    <name type="scientific">Vibrio cholerae serotype O1 (strain ATCC 39541 / Classical Ogawa 395 / O395)</name>
    <dbReference type="NCBI Taxonomy" id="345073"/>
    <lineage>
        <taxon>Bacteria</taxon>
        <taxon>Pseudomonadati</taxon>
        <taxon>Pseudomonadota</taxon>
        <taxon>Gammaproteobacteria</taxon>
        <taxon>Vibrionales</taxon>
        <taxon>Vibrionaceae</taxon>
        <taxon>Vibrio</taxon>
    </lineage>
</organism>
<evidence type="ECO:0000255" key="1">
    <source>
        <dbReference type="HAMAP-Rule" id="MF_01053"/>
    </source>
</evidence>
<sequence>MEFEFIKNTLLGEYAVRCNMEHQIVGRWLQEEIGQDLAKLKHVLTLIDKAEQSPAQEFLWTGREISLLVQGDEITVQENALAYESEHELETDFALYDSESIAACGREDFVALLTQWQSFIQNQGRF</sequence>
<dbReference type="EMBL" id="CP000627">
    <property type="protein sequence ID" value="ABQ19628.1"/>
    <property type="molecule type" value="Genomic_DNA"/>
</dbReference>
<dbReference type="EMBL" id="CP001235">
    <property type="protein sequence ID" value="ACP08640.1"/>
    <property type="molecule type" value="Genomic_DNA"/>
</dbReference>
<dbReference type="RefSeq" id="WP_000393917.1">
    <property type="nucleotide sequence ID" value="NZ_JAACZH010000006.1"/>
</dbReference>
<dbReference type="KEGG" id="vco:VC0395_A0134"/>
<dbReference type="KEGG" id="vcr:VC395_0622"/>
<dbReference type="PATRIC" id="fig|345073.21.peg.604"/>
<dbReference type="eggNOG" id="COG3112">
    <property type="taxonomic scope" value="Bacteria"/>
</dbReference>
<dbReference type="HOGENOM" id="CLU_139226_0_0_6"/>
<dbReference type="OrthoDB" id="5739292at2"/>
<dbReference type="Proteomes" id="UP000000249">
    <property type="component" value="Chromosome 2"/>
</dbReference>
<dbReference type="HAMAP" id="MF_01053">
    <property type="entry name" value="UPF0231"/>
    <property type="match status" value="1"/>
</dbReference>
<dbReference type="InterPro" id="IPR008249">
    <property type="entry name" value="UPF0231"/>
</dbReference>
<dbReference type="NCBIfam" id="NF003577">
    <property type="entry name" value="PRK05248.2-1"/>
    <property type="match status" value="1"/>
</dbReference>
<dbReference type="Pfam" id="PF06062">
    <property type="entry name" value="UPF0231"/>
    <property type="match status" value="1"/>
</dbReference>
<dbReference type="PIRSF" id="PIRSF006287">
    <property type="entry name" value="UCP006287"/>
    <property type="match status" value="1"/>
</dbReference>
<comment type="similarity">
    <text evidence="1">Belongs to the UPF0231 family.</text>
</comment>
<name>Y1334_VIBC3</name>
<reference key="1">
    <citation type="submission" date="2007-03" db="EMBL/GenBank/DDBJ databases">
        <authorList>
            <person name="Heidelberg J."/>
        </authorList>
    </citation>
    <scope>NUCLEOTIDE SEQUENCE [LARGE SCALE GENOMIC DNA]</scope>
    <source>
        <strain>ATCC 39541 / Classical Ogawa 395 / O395</strain>
    </source>
</reference>
<reference key="2">
    <citation type="journal article" date="2008" name="PLoS ONE">
        <title>A recalibrated molecular clock and independent origins for the cholera pandemic clones.</title>
        <authorList>
            <person name="Feng L."/>
            <person name="Reeves P.R."/>
            <person name="Lan R."/>
            <person name="Ren Y."/>
            <person name="Gao C."/>
            <person name="Zhou Z."/>
            <person name="Ren Y."/>
            <person name="Cheng J."/>
            <person name="Wang W."/>
            <person name="Wang J."/>
            <person name="Qian W."/>
            <person name="Li D."/>
            <person name="Wang L."/>
        </authorList>
    </citation>
    <scope>NUCLEOTIDE SEQUENCE [LARGE SCALE GENOMIC DNA]</scope>
    <source>
        <strain>ATCC 39541 / Classical Ogawa 395 / O395</strain>
    </source>
</reference>
<protein>
    <recommendedName>
        <fullName evidence="1">UPF0231 protein VC0395_A0134/VC395_0622</fullName>
    </recommendedName>
</protein>